<name>PBPA_CLOBL</name>
<feature type="chain" id="PRO_0000321874" description="Penicillin-binding protein 1A">
    <location>
        <begin position="1"/>
        <end position="827"/>
    </location>
</feature>
<feature type="topological domain" description="Cytoplasmic" evidence="4">
    <location>
        <begin position="1"/>
        <end position="18"/>
    </location>
</feature>
<feature type="transmembrane region" description="Helical; Signal-anchor for type II membrane protein" evidence="4">
    <location>
        <begin position="19"/>
        <end position="39"/>
    </location>
</feature>
<feature type="topological domain" description="Extracellular" evidence="4">
    <location>
        <begin position="40"/>
        <end position="827"/>
    </location>
</feature>
<feature type="region of interest" description="Transglycosylase" evidence="1">
    <location>
        <begin position="57"/>
        <end position="229"/>
    </location>
</feature>
<feature type="region of interest" description="Transpeptidase" evidence="1">
    <location>
        <begin position="357"/>
        <end position="641"/>
    </location>
</feature>
<feature type="region of interest" description="Disordered" evidence="5">
    <location>
        <begin position="755"/>
        <end position="827"/>
    </location>
</feature>
<feature type="compositionally biased region" description="Basic and acidic residues" evidence="5">
    <location>
        <begin position="760"/>
        <end position="790"/>
    </location>
</feature>
<feature type="compositionally biased region" description="Low complexity" evidence="5">
    <location>
        <begin position="791"/>
        <end position="817"/>
    </location>
</feature>
<feature type="compositionally biased region" description="Basic and acidic residues" evidence="5">
    <location>
        <begin position="818"/>
        <end position="827"/>
    </location>
</feature>
<feature type="active site" description="Proton donor; for transglycosylase activity" evidence="3">
    <location>
        <position position="96"/>
    </location>
</feature>
<feature type="active site" description="Acyl-ester intermediate; for transpeptidase activity" evidence="3">
    <location>
        <position position="398"/>
    </location>
</feature>
<proteinExistence type="inferred from homology"/>
<accession>A7GHV1</accession>
<gene>
    <name type="primary">pbpA</name>
    <name type="ordered locus">CLI_3142</name>
</gene>
<dbReference type="EC" id="2.4.99.28" evidence="2"/>
<dbReference type="EC" id="3.4.16.4" evidence="2"/>
<dbReference type="EMBL" id="CP000728">
    <property type="protein sequence ID" value="ABS42508.1"/>
    <property type="molecule type" value="Genomic_DNA"/>
</dbReference>
<dbReference type="RefSeq" id="WP_012100804.1">
    <property type="nucleotide sequence ID" value="NC_009699.1"/>
</dbReference>
<dbReference type="SMR" id="A7GHV1"/>
<dbReference type="CAZy" id="GT51">
    <property type="family name" value="Glycosyltransferase Family 51"/>
</dbReference>
<dbReference type="KEGG" id="cbf:CLI_3142"/>
<dbReference type="HOGENOM" id="CLU_006354_2_2_9"/>
<dbReference type="UniPathway" id="UPA00219"/>
<dbReference type="Proteomes" id="UP000002410">
    <property type="component" value="Chromosome"/>
</dbReference>
<dbReference type="GO" id="GO:0005886">
    <property type="term" value="C:plasma membrane"/>
    <property type="evidence" value="ECO:0007669"/>
    <property type="project" value="UniProtKB-SubCell"/>
</dbReference>
<dbReference type="GO" id="GO:0008658">
    <property type="term" value="F:penicillin binding"/>
    <property type="evidence" value="ECO:0007669"/>
    <property type="project" value="InterPro"/>
</dbReference>
<dbReference type="GO" id="GO:0008955">
    <property type="term" value="F:peptidoglycan glycosyltransferase activity"/>
    <property type="evidence" value="ECO:0007669"/>
    <property type="project" value="TreeGrafter"/>
</dbReference>
<dbReference type="GO" id="GO:0009002">
    <property type="term" value="F:serine-type D-Ala-D-Ala carboxypeptidase activity"/>
    <property type="evidence" value="ECO:0007669"/>
    <property type="project" value="UniProtKB-EC"/>
</dbReference>
<dbReference type="GO" id="GO:0071555">
    <property type="term" value="P:cell wall organization"/>
    <property type="evidence" value="ECO:0007669"/>
    <property type="project" value="UniProtKB-KW"/>
</dbReference>
<dbReference type="GO" id="GO:0009252">
    <property type="term" value="P:peptidoglycan biosynthetic process"/>
    <property type="evidence" value="ECO:0007669"/>
    <property type="project" value="UniProtKB-UniPathway"/>
</dbReference>
<dbReference type="GO" id="GO:0006508">
    <property type="term" value="P:proteolysis"/>
    <property type="evidence" value="ECO:0007669"/>
    <property type="project" value="UniProtKB-KW"/>
</dbReference>
<dbReference type="GO" id="GO:0008360">
    <property type="term" value="P:regulation of cell shape"/>
    <property type="evidence" value="ECO:0007669"/>
    <property type="project" value="UniProtKB-KW"/>
</dbReference>
<dbReference type="GO" id="GO:0046677">
    <property type="term" value="P:response to antibiotic"/>
    <property type="evidence" value="ECO:0007669"/>
    <property type="project" value="UniProtKB-KW"/>
</dbReference>
<dbReference type="FunFam" id="1.10.3810.10:FF:000001">
    <property type="entry name" value="Penicillin-binding protein 1A"/>
    <property type="match status" value="1"/>
</dbReference>
<dbReference type="FunFam" id="3.40.710.10:FF:000112">
    <property type="entry name" value="Penicillin-binding protein 1A"/>
    <property type="match status" value="1"/>
</dbReference>
<dbReference type="Gene3D" id="1.10.3810.10">
    <property type="entry name" value="Biosynthetic peptidoglycan transglycosylase-like"/>
    <property type="match status" value="1"/>
</dbReference>
<dbReference type="Gene3D" id="3.40.710.10">
    <property type="entry name" value="DD-peptidase/beta-lactamase superfamily"/>
    <property type="match status" value="1"/>
</dbReference>
<dbReference type="InterPro" id="IPR012338">
    <property type="entry name" value="Beta-lactam/transpept-like"/>
</dbReference>
<dbReference type="InterPro" id="IPR001264">
    <property type="entry name" value="Glyco_trans_51"/>
</dbReference>
<dbReference type="InterPro" id="IPR050396">
    <property type="entry name" value="Glycosyltr_51/Transpeptidase"/>
</dbReference>
<dbReference type="InterPro" id="IPR023346">
    <property type="entry name" value="Lysozyme-like_dom_sf"/>
</dbReference>
<dbReference type="InterPro" id="IPR036950">
    <property type="entry name" value="PBP_transglycosylase"/>
</dbReference>
<dbReference type="InterPro" id="IPR001460">
    <property type="entry name" value="PCN-bd_Tpept"/>
</dbReference>
<dbReference type="NCBIfam" id="TIGR02074">
    <property type="entry name" value="PBP_1a_fam"/>
    <property type="match status" value="1"/>
</dbReference>
<dbReference type="PANTHER" id="PTHR32282">
    <property type="entry name" value="BINDING PROTEIN TRANSPEPTIDASE, PUTATIVE-RELATED"/>
    <property type="match status" value="1"/>
</dbReference>
<dbReference type="PANTHER" id="PTHR32282:SF33">
    <property type="entry name" value="PEPTIDOGLYCAN GLYCOSYLTRANSFERASE"/>
    <property type="match status" value="1"/>
</dbReference>
<dbReference type="Pfam" id="PF00912">
    <property type="entry name" value="Transgly"/>
    <property type="match status" value="1"/>
</dbReference>
<dbReference type="Pfam" id="PF00905">
    <property type="entry name" value="Transpeptidase"/>
    <property type="match status" value="1"/>
</dbReference>
<dbReference type="SUPFAM" id="SSF56601">
    <property type="entry name" value="beta-lactamase/transpeptidase-like"/>
    <property type="match status" value="1"/>
</dbReference>
<dbReference type="SUPFAM" id="SSF53955">
    <property type="entry name" value="Lysozyme-like"/>
    <property type="match status" value="1"/>
</dbReference>
<keyword id="KW-0046">Antibiotic resistance</keyword>
<keyword id="KW-0121">Carboxypeptidase</keyword>
<keyword id="KW-1003">Cell membrane</keyword>
<keyword id="KW-0133">Cell shape</keyword>
<keyword id="KW-0961">Cell wall biogenesis/degradation</keyword>
<keyword id="KW-0328">Glycosyltransferase</keyword>
<keyword id="KW-0378">Hydrolase</keyword>
<keyword id="KW-0472">Membrane</keyword>
<keyword id="KW-0511">Multifunctional enzyme</keyword>
<keyword id="KW-0573">Peptidoglycan synthesis</keyword>
<keyword id="KW-0645">Protease</keyword>
<keyword id="KW-0735">Signal-anchor</keyword>
<keyword id="KW-0808">Transferase</keyword>
<keyword id="KW-0812">Transmembrane</keyword>
<keyword id="KW-1133">Transmembrane helix</keyword>
<protein>
    <recommendedName>
        <fullName>Penicillin-binding protein 1A</fullName>
        <shortName>PBP1a</shortName>
    </recommendedName>
    <domain>
        <recommendedName>
            <fullName>Penicillin-insensitive transglycosylase</fullName>
            <ecNumber evidence="2">2.4.99.28</ecNumber>
        </recommendedName>
        <alternativeName>
            <fullName>Peptidoglycan TGase</fullName>
        </alternativeName>
    </domain>
    <domain>
        <recommendedName>
            <fullName>Penicillin-sensitive transpeptidase</fullName>
            <ecNumber evidence="2">3.4.16.4</ecNumber>
        </recommendedName>
        <alternativeName>
            <fullName>DD-transpeptidase</fullName>
        </alternativeName>
    </domain>
</protein>
<comment type="function">
    <text evidence="1">Cell wall formation. Synthesis of cross-linked peptidoglycan from the lipid intermediates. The enzyme has a penicillin-insensitive transglycosylase N-terminal domain (formation of linear glycan strands) and a penicillin-sensitive transpeptidase C-terminal domain (cross-linking of the peptide subunits).</text>
</comment>
<comment type="catalytic activity">
    <reaction evidence="2">
        <text>[GlcNAc-(1-&gt;4)-Mur2Ac(oyl-L-Ala-gamma-D-Glu-L-Lys-D-Ala-D-Ala)](n)-di-trans,octa-cis-undecaprenyl diphosphate + beta-D-GlcNAc-(1-&gt;4)-Mur2Ac(oyl-L-Ala-gamma-D-Glu-L-Lys-D-Ala-D-Ala)-di-trans,octa-cis-undecaprenyl diphosphate = [GlcNAc-(1-&gt;4)-Mur2Ac(oyl-L-Ala-gamma-D-Glu-L-Lys-D-Ala-D-Ala)](n+1)-di-trans,octa-cis-undecaprenyl diphosphate + di-trans,octa-cis-undecaprenyl diphosphate + H(+)</text>
        <dbReference type="Rhea" id="RHEA:23708"/>
        <dbReference type="Rhea" id="RHEA-COMP:9602"/>
        <dbReference type="Rhea" id="RHEA-COMP:9603"/>
        <dbReference type="ChEBI" id="CHEBI:15378"/>
        <dbReference type="ChEBI" id="CHEBI:58405"/>
        <dbReference type="ChEBI" id="CHEBI:60033"/>
        <dbReference type="ChEBI" id="CHEBI:78435"/>
        <dbReference type="EC" id="2.4.99.28"/>
    </reaction>
</comment>
<comment type="catalytic activity">
    <reaction evidence="2">
        <text>Preferential cleavage: (Ac)2-L-Lys-D-Ala-|-D-Ala. Also transpeptidation of peptidyl-alanyl moieties that are N-acyl substituents of D-alanine.</text>
        <dbReference type="EC" id="3.4.16.4"/>
    </reaction>
</comment>
<comment type="pathway">
    <text>Cell wall biogenesis; peptidoglycan biosynthesis.</text>
</comment>
<comment type="subcellular location">
    <subcellularLocation>
        <location evidence="6">Cell membrane</location>
        <topology evidence="6">Single-pass type II membrane protein</topology>
    </subcellularLocation>
</comment>
<comment type="similarity">
    <text evidence="6">In the N-terminal section; belongs to the glycosyltransferase 51 family.</text>
</comment>
<comment type="similarity">
    <text evidence="6">In the C-terminal section; belongs to the transpeptidase family.</text>
</comment>
<organism>
    <name type="scientific">Clostridium botulinum (strain Langeland / NCTC 10281 / Type F)</name>
    <dbReference type="NCBI Taxonomy" id="441772"/>
    <lineage>
        <taxon>Bacteria</taxon>
        <taxon>Bacillati</taxon>
        <taxon>Bacillota</taxon>
        <taxon>Clostridia</taxon>
        <taxon>Eubacteriales</taxon>
        <taxon>Clostridiaceae</taxon>
        <taxon>Clostridium</taxon>
    </lineage>
</organism>
<sequence length="827" mass="92415">MGKKKKKRKSSAFKIILNVFLSIFLVAGVAFGGIVFAMIKTAPPLNVQQVLTFDEPSILYDDKGQYMDKVITNEQRIVVDYKNVPQNLKNAFVSIEDERFYKHHGVDIKRFTGVILINVTNKIKRSSKLQGASTLTQQLIKNTVLSSEVSIKRKVQEMYLSIQLEKELSKDEILGAYMNSIFLGGNALGVEAASKQYFNKSVKDLSLIECAFIAGVPQSPSVYYPYSSASKKNPSIYLNRTKTVLYKMLDNGYITQNDYNKALKDLDSKKLAFAKPSAPSNKLAYEWFSIPAIEQVKKDLKTQYKYDDKQIHNLLVNGGLKIYTTMNKNLQDKTQNTINDAYYLNSYKSNGIIYPQASAVIMDYHNGEVKTIVGGRGDQPARSYNRAASYNYLRPAGSSIKPLTVYSAAIDSKKATAATGFEDSPIPNNIGRKYSSGAPYNPRNTPDIYYGYVNVREALMRSINVVAVKLVDKIGLNTSIQYAEKFGIPIDQHDRSSIASLSLGELHKGTNPLIMAQAYGVFGNNGTYTEAKLYTKVVDRTGKVLLEPKTNTKKVLSPEAAFITYDMLQGPVSESGTGPQANFGNMEVRGKTGTSSDMKNLWFCGLTPYYSAAVWIGNDNSSTVDGVYSSTAARLWGDIMKEFHVNLPYKQVQKPASVVTANVDRISGKLPTQLSYRDPRGSTVYNEFFINGTIPTEYDDIHVEAQINKLTGKLASKFTPSFLVESRVFLRRDYSPGVELLDQQWLLPYSIDEGGSLPPTEEKNNSNTRDKNKDKNKDKDKNKNKDKNPSQDKPNNNNNNNNNDNNNNTKPPENDSNQNHEDNKNKQ</sequence>
<reference key="1">
    <citation type="submission" date="2007-06" db="EMBL/GenBank/DDBJ databases">
        <authorList>
            <person name="Brinkac L.M."/>
            <person name="Daugherty S."/>
            <person name="Dodson R.J."/>
            <person name="Madupu R."/>
            <person name="Brown J.L."/>
            <person name="Bruce D."/>
            <person name="Detter C."/>
            <person name="Munk C."/>
            <person name="Smith L.A."/>
            <person name="Smith T.J."/>
            <person name="White O."/>
            <person name="Brettin T.S."/>
        </authorList>
    </citation>
    <scope>NUCLEOTIDE SEQUENCE [LARGE SCALE GENOMIC DNA]</scope>
    <source>
        <strain>Langeland / NCTC 10281 / Type F</strain>
    </source>
</reference>
<evidence type="ECO:0000250" key="1"/>
<evidence type="ECO:0000250" key="2">
    <source>
        <dbReference type="UniProtKB" id="P02918"/>
    </source>
</evidence>
<evidence type="ECO:0000250" key="3">
    <source>
        <dbReference type="UniProtKB" id="P02919"/>
    </source>
</evidence>
<evidence type="ECO:0000255" key="4"/>
<evidence type="ECO:0000256" key="5">
    <source>
        <dbReference type="SAM" id="MobiDB-lite"/>
    </source>
</evidence>
<evidence type="ECO:0000305" key="6"/>